<gene>
    <name evidence="1" type="primary">frr</name>
    <name type="ordered locus">LEPBI_I2614</name>
</gene>
<protein>
    <recommendedName>
        <fullName evidence="1">Ribosome-recycling factor</fullName>
        <shortName evidence="1">RRF</shortName>
    </recommendedName>
    <alternativeName>
        <fullName evidence="1">Ribosome-releasing factor</fullName>
    </alternativeName>
</protein>
<name>RRF_LEPBP</name>
<proteinExistence type="inferred from homology"/>
<evidence type="ECO:0000255" key="1">
    <source>
        <dbReference type="HAMAP-Rule" id="MF_00040"/>
    </source>
</evidence>
<evidence type="ECO:0000256" key="2">
    <source>
        <dbReference type="SAM" id="MobiDB-lite"/>
    </source>
</evidence>
<reference key="1">
    <citation type="journal article" date="2008" name="PLoS ONE">
        <title>Genome sequence of the saprophyte Leptospira biflexa provides insights into the evolution of Leptospira and the pathogenesis of leptospirosis.</title>
        <authorList>
            <person name="Picardeau M."/>
            <person name="Bulach D.M."/>
            <person name="Bouchier C."/>
            <person name="Zuerner R.L."/>
            <person name="Zidane N."/>
            <person name="Wilson P.J."/>
            <person name="Creno S."/>
            <person name="Kuczek E.S."/>
            <person name="Bommezzadri S."/>
            <person name="Davis J.C."/>
            <person name="McGrath A."/>
            <person name="Johnson M.J."/>
            <person name="Boursaux-Eude C."/>
            <person name="Seemann T."/>
            <person name="Rouy Z."/>
            <person name="Coppel R.L."/>
            <person name="Rood J.I."/>
            <person name="Lajus A."/>
            <person name="Davies J.K."/>
            <person name="Medigue C."/>
            <person name="Adler B."/>
        </authorList>
    </citation>
    <scope>NUCLEOTIDE SEQUENCE [LARGE SCALE GENOMIC DNA]</scope>
    <source>
        <strain>Patoc 1 / ATCC 23582 / Paris</strain>
    </source>
</reference>
<accession>B0SM63</accession>
<feature type="chain" id="PRO_1000090755" description="Ribosome-recycling factor">
    <location>
        <begin position="1"/>
        <end position="183"/>
    </location>
</feature>
<feature type="region of interest" description="Disordered" evidence="2">
    <location>
        <begin position="134"/>
        <end position="156"/>
    </location>
</feature>
<comment type="function">
    <text evidence="1">Responsible for the release of ribosomes from messenger RNA at the termination of protein biosynthesis. May increase the efficiency of translation by recycling ribosomes from one round of translation to another.</text>
</comment>
<comment type="subcellular location">
    <subcellularLocation>
        <location evidence="1">Cytoplasm</location>
    </subcellularLocation>
</comment>
<comment type="similarity">
    <text evidence="1">Belongs to the RRF family.</text>
</comment>
<sequence length="183" mass="20697">MVDEIIKSMQSKMDKTVDALKKDFGTIRTGKANPMMVEDVRVDYYGTLTPLNQLGKIACPEPRVILITPFEKGMLKDIEKAIFAASLGLTPNNDGSSIRINIPELTGERRKELAKVVKQKAEEKKVAIRNIRRDANDELKKHQSEMSQDEVKGHQDKIQKITDSYIAKLGDLEKEKEKEITTL</sequence>
<organism>
    <name type="scientific">Leptospira biflexa serovar Patoc (strain Patoc 1 / ATCC 23582 / Paris)</name>
    <dbReference type="NCBI Taxonomy" id="456481"/>
    <lineage>
        <taxon>Bacteria</taxon>
        <taxon>Pseudomonadati</taxon>
        <taxon>Spirochaetota</taxon>
        <taxon>Spirochaetia</taxon>
        <taxon>Leptospirales</taxon>
        <taxon>Leptospiraceae</taxon>
        <taxon>Leptospira</taxon>
    </lineage>
</organism>
<dbReference type="EMBL" id="CP000786">
    <property type="protein sequence ID" value="ABZ98693.1"/>
    <property type="molecule type" value="Genomic_DNA"/>
</dbReference>
<dbReference type="RefSeq" id="WP_012389553.1">
    <property type="nucleotide sequence ID" value="NC_010602.1"/>
</dbReference>
<dbReference type="SMR" id="B0SM63"/>
<dbReference type="STRING" id="456481.LEPBI_I2614"/>
<dbReference type="GeneID" id="93341986"/>
<dbReference type="KEGG" id="lbi:LEPBI_I2614"/>
<dbReference type="HOGENOM" id="CLU_073981_2_0_12"/>
<dbReference type="OrthoDB" id="9804006at2"/>
<dbReference type="BioCyc" id="LBIF456481:LEPBI_RS12860-MONOMER"/>
<dbReference type="Proteomes" id="UP000001847">
    <property type="component" value="Chromosome I"/>
</dbReference>
<dbReference type="GO" id="GO:0005737">
    <property type="term" value="C:cytoplasm"/>
    <property type="evidence" value="ECO:0007669"/>
    <property type="project" value="UniProtKB-SubCell"/>
</dbReference>
<dbReference type="GO" id="GO:0043023">
    <property type="term" value="F:ribosomal large subunit binding"/>
    <property type="evidence" value="ECO:0007669"/>
    <property type="project" value="TreeGrafter"/>
</dbReference>
<dbReference type="GO" id="GO:0006415">
    <property type="term" value="P:translational termination"/>
    <property type="evidence" value="ECO:0007669"/>
    <property type="project" value="UniProtKB-UniRule"/>
</dbReference>
<dbReference type="CDD" id="cd00520">
    <property type="entry name" value="RRF"/>
    <property type="match status" value="1"/>
</dbReference>
<dbReference type="FunFam" id="1.10.132.20:FF:000001">
    <property type="entry name" value="Ribosome-recycling factor"/>
    <property type="match status" value="1"/>
</dbReference>
<dbReference type="FunFam" id="3.30.1360.40:FF:000001">
    <property type="entry name" value="Ribosome-recycling factor"/>
    <property type="match status" value="1"/>
</dbReference>
<dbReference type="Gene3D" id="3.30.1360.40">
    <property type="match status" value="1"/>
</dbReference>
<dbReference type="Gene3D" id="1.10.132.20">
    <property type="entry name" value="Ribosome-recycling factor"/>
    <property type="match status" value="1"/>
</dbReference>
<dbReference type="HAMAP" id="MF_00040">
    <property type="entry name" value="RRF"/>
    <property type="match status" value="1"/>
</dbReference>
<dbReference type="InterPro" id="IPR002661">
    <property type="entry name" value="Ribosome_recyc_fac"/>
</dbReference>
<dbReference type="InterPro" id="IPR023584">
    <property type="entry name" value="Ribosome_recyc_fac_dom"/>
</dbReference>
<dbReference type="InterPro" id="IPR036191">
    <property type="entry name" value="RRF_sf"/>
</dbReference>
<dbReference type="NCBIfam" id="TIGR00496">
    <property type="entry name" value="frr"/>
    <property type="match status" value="1"/>
</dbReference>
<dbReference type="PANTHER" id="PTHR20982:SF3">
    <property type="entry name" value="MITOCHONDRIAL RIBOSOME RECYCLING FACTOR PSEUDO 1"/>
    <property type="match status" value="1"/>
</dbReference>
<dbReference type="PANTHER" id="PTHR20982">
    <property type="entry name" value="RIBOSOME RECYCLING FACTOR"/>
    <property type="match status" value="1"/>
</dbReference>
<dbReference type="Pfam" id="PF01765">
    <property type="entry name" value="RRF"/>
    <property type="match status" value="1"/>
</dbReference>
<dbReference type="SUPFAM" id="SSF55194">
    <property type="entry name" value="Ribosome recycling factor, RRF"/>
    <property type="match status" value="1"/>
</dbReference>
<keyword id="KW-0963">Cytoplasm</keyword>
<keyword id="KW-0648">Protein biosynthesis</keyword>
<keyword id="KW-1185">Reference proteome</keyword>